<protein>
    <recommendedName>
        <fullName evidence="1">RNA pyrophosphohydrolase</fullName>
        <ecNumber evidence="1">3.6.1.-</ecNumber>
    </recommendedName>
    <alternativeName>
        <fullName evidence="1">(Di)nucleoside polyphosphate hydrolase</fullName>
    </alternativeName>
</protein>
<comment type="function">
    <text evidence="1">Accelerates the degradation of transcripts by removing pyrophosphate from the 5'-end of triphosphorylated RNA, leading to a more labile monophosphorylated state that can stimulate subsequent ribonuclease cleavage.</text>
</comment>
<comment type="cofactor">
    <cofactor evidence="1">
        <name>a divalent metal cation</name>
        <dbReference type="ChEBI" id="CHEBI:60240"/>
    </cofactor>
</comment>
<comment type="similarity">
    <text evidence="1">Belongs to the Nudix hydrolase family. RppH subfamily.</text>
</comment>
<feature type="chain" id="PRO_1000021979" description="RNA pyrophosphohydrolase">
    <location>
        <begin position="1"/>
        <end position="213"/>
    </location>
</feature>
<feature type="domain" description="Nudix hydrolase" evidence="1">
    <location>
        <begin position="6"/>
        <end position="149"/>
    </location>
</feature>
<feature type="region of interest" description="Disordered" evidence="2">
    <location>
        <begin position="185"/>
        <end position="213"/>
    </location>
</feature>
<feature type="short sequence motif" description="Nudix box">
    <location>
        <begin position="38"/>
        <end position="59"/>
    </location>
</feature>
<evidence type="ECO:0000255" key="1">
    <source>
        <dbReference type="HAMAP-Rule" id="MF_00298"/>
    </source>
</evidence>
<evidence type="ECO:0000256" key="2">
    <source>
        <dbReference type="SAM" id="MobiDB-lite"/>
    </source>
</evidence>
<dbReference type="EC" id="3.6.1.-" evidence="1"/>
<dbReference type="EMBL" id="CP000267">
    <property type="protein sequence ID" value="ABD69007.1"/>
    <property type="molecule type" value="Genomic_DNA"/>
</dbReference>
<dbReference type="RefSeq" id="WP_011463575.1">
    <property type="nucleotide sequence ID" value="NC_007908.1"/>
</dbReference>
<dbReference type="SMR" id="Q21YZ6"/>
<dbReference type="STRING" id="338969.Rfer_1273"/>
<dbReference type="KEGG" id="rfr:Rfer_1273"/>
<dbReference type="eggNOG" id="COG0494">
    <property type="taxonomic scope" value="Bacteria"/>
</dbReference>
<dbReference type="HOGENOM" id="CLU_087195_1_1_4"/>
<dbReference type="OrthoDB" id="9816040at2"/>
<dbReference type="Proteomes" id="UP000008332">
    <property type="component" value="Chromosome"/>
</dbReference>
<dbReference type="GO" id="GO:0016462">
    <property type="term" value="F:pyrophosphatase activity"/>
    <property type="evidence" value="ECO:0007669"/>
    <property type="project" value="UniProtKB-ARBA"/>
</dbReference>
<dbReference type="CDD" id="cd03671">
    <property type="entry name" value="NUDIX_Ap4A_hydrolase_plant_like"/>
    <property type="match status" value="1"/>
</dbReference>
<dbReference type="Gene3D" id="3.90.79.10">
    <property type="entry name" value="Nucleoside Triphosphate Pyrophosphohydrolase"/>
    <property type="match status" value="1"/>
</dbReference>
<dbReference type="HAMAP" id="MF_00298">
    <property type="entry name" value="Nudix_RppH"/>
    <property type="match status" value="1"/>
</dbReference>
<dbReference type="InterPro" id="IPR020476">
    <property type="entry name" value="Nudix_hydrolase"/>
</dbReference>
<dbReference type="InterPro" id="IPR015797">
    <property type="entry name" value="NUDIX_hydrolase-like_dom_sf"/>
</dbReference>
<dbReference type="InterPro" id="IPR020084">
    <property type="entry name" value="NUDIX_hydrolase_CS"/>
</dbReference>
<dbReference type="InterPro" id="IPR000086">
    <property type="entry name" value="NUDIX_hydrolase_dom"/>
</dbReference>
<dbReference type="InterPro" id="IPR022927">
    <property type="entry name" value="RppH"/>
</dbReference>
<dbReference type="NCBIfam" id="NF001935">
    <property type="entry name" value="PRK00714.1-2"/>
    <property type="match status" value="1"/>
</dbReference>
<dbReference type="NCBIfam" id="NF001937">
    <property type="entry name" value="PRK00714.1-4"/>
    <property type="match status" value="1"/>
</dbReference>
<dbReference type="NCBIfam" id="NF001938">
    <property type="entry name" value="PRK00714.1-5"/>
    <property type="match status" value="1"/>
</dbReference>
<dbReference type="PANTHER" id="PTHR43736">
    <property type="entry name" value="ADP-RIBOSE PYROPHOSPHATASE"/>
    <property type="match status" value="1"/>
</dbReference>
<dbReference type="PANTHER" id="PTHR43736:SF1">
    <property type="entry name" value="DIHYDRONEOPTERIN TRIPHOSPHATE DIPHOSPHATASE"/>
    <property type="match status" value="1"/>
</dbReference>
<dbReference type="Pfam" id="PF00293">
    <property type="entry name" value="NUDIX"/>
    <property type="match status" value="1"/>
</dbReference>
<dbReference type="PRINTS" id="PR00502">
    <property type="entry name" value="NUDIXFAMILY"/>
</dbReference>
<dbReference type="SUPFAM" id="SSF55811">
    <property type="entry name" value="Nudix"/>
    <property type="match status" value="1"/>
</dbReference>
<dbReference type="PROSITE" id="PS51462">
    <property type="entry name" value="NUDIX"/>
    <property type="match status" value="1"/>
</dbReference>
<dbReference type="PROSITE" id="PS00893">
    <property type="entry name" value="NUDIX_BOX"/>
    <property type="match status" value="1"/>
</dbReference>
<accession>Q21YZ6</accession>
<reference key="1">
    <citation type="submission" date="2006-02" db="EMBL/GenBank/DDBJ databases">
        <title>Complete sequence of chromosome of Rhodoferax ferrireducens DSM 15236.</title>
        <authorList>
            <person name="Copeland A."/>
            <person name="Lucas S."/>
            <person name="Lapidus A."/>
            <person name="Barry K."/>
            <person name="Detter J.C."/>
            <person name="Glavina del Rio T."/>
            <person name="Hammon N."/>
            <person name="Israni S."/>
            <person name="Pitluck S."/>
            <person name="Brettin T."/>
            <person name="Bruce D."/>
            <person name="Han C."/>
            <person name="Tapia R."/>
            <person name="Gilna P."/>
            <person name="Kiss H."/>
            <person name="Schmutz J."/>
            <person name="Larimer F."/>
            <person name="Land M."/>
            <person name="Kyrpides N."/>
            <person name="Ivanova N."/>
            <person name="Richardson P."/>
        </authorList>
    </citation>
    <scope>NUCLEOTIDE SEQUENCE [LARGE SCALE GENOMIC DNA]</scope>
    <source>
        <strain>ATCC BAA-621 / DSM 15236 / T118</strain>
    </source>
</reference>
<name>RPPH_ALBFT</name>
<keyword id="KW-0378">Hydrolase</keyword>
<keyword id="KW-1185">Reference proteome</keyword>
<proteinExistence type="inferred from homology"/>
<sequence>MLDREGFRPNVGIVLLNQKNQVFWGKRIRTHSWQFPQGGIDRGETPEQAMIRELHEEVGLLREHIRIVARTRDWLRYEVPDRYIRRDARGFYKGQKQIWFLLQLVGHDWDLNLRATDHPEFDAWRWNDYWVPLDAVVEFKRGVYEIALTELARYLPRNELRNRFLRQGVRPHEQETTFDAVPGANFELPPGGSFEPNPQTSYGLDASGKPHET</sequence>
<gene>
    <name evidence="1" type="primary">rppH</name>
    <name evidence="1" type="synonym">nudH</name>
    <name type="ordered locus">Rfer_1273</name>
</gene>
<organism>
    <name type="scientific">Albidiferax ferrireducens (strain ATCC BAA-621 / DSM 15236 / T118)</name>
    <name type="common">Rhodoferax ferrireducens</name>
    <dbReference type="NCBI Taxonomy" id="338969"/>
    <lineage>
        <taxon>Bacteria</taxon>
        <taxon>Pseudomonadati</taxon>
        <taxon>Pseudomonadota</taxon>
        <taxon>Betaproteobacteria</taxon>
        <taxon>Burkholderiales</taxon>
        <taxon>Comamonadaceae</taxon>
        <taxon>Rhodoferax</taxon>
    </lineage>
</organism>